<accession>C0Q6F4</accession>
<feature type="chain" id="PRO_1000188836" description="L-ribulose-5-phosphate 3-epimerase UlaE">
    <location>
        <begin position="1"/>
        <end position="284"/>
    </location>
</feature>
<dbReference type="EC" id="5.1.3.22" evidence="1"/>
<dbReference type="EMBL" id="CP000857">
    <property type="protein sequence ID" value="ACN48584.1"/>
    <property type="molecule type" value="Genomic_DNA"/>
</dbReference>
<dbReference type="RefSeq" id="WP_000949531.1">
    <property type="nucleotide sequence ID" value="NC_012125.1"/>
</dbReference>
<dbReference type="SMR" id="C0Q6F4"/>
<dbReference type="KEGG" id="sei:SPC_4534"/>
<dbReference type="HOGENOM" id="CLU_082738_0_0_6"/>
<dbReference type="UniPathway" id="UPA00263">
    <property type="reaction ID" value="UER00379"/>
</dbReference>
<dbReference type="Proteomes" id="UP000001599">
    <property type="component" value="Chromosome"/>
</dbReference>
<dbReference type="GO" id="GO:0016861">
    <property type="term" value="F:intramolecular oxidoreductase activity, interconverting aldoses and ketoses"/>
    <property type="evidence" value="ECO:0007669"/>
    <property type="project" value="InterPro"/>
</dbReference>
<dbReference type="GO" id="GO:0034015">
    <property type="term" value="F:L-ribulose-5-phosphate 3-epimerase activity"/>
    <property type="evidence" value="ECO:0007669"/>
    <property type="project" value="UniProtKB-UniRule"/>
</dbReference>
<dbReference type="GO" id="GO:0019854">
    <property type="term" value="P:L-ascorbic acid catabolic process"/>
    <property type="evidence" value="ECO:0007669"/>
    <property type="project" value="UniProtKB-UniRule"/>
</dbReference>
<dbReference type="FunFam" id="3.20.20.150:FF:000003">
    <property type="entry name" value="L-ribulose-5-phosphate 3-epimerase UlaE"/>
    <property type="match status" value="1"/>
</dbReference>
<dbReference type="Gene3D" id="3.20.20.150">
    <property type="entry name" value="Divalent-metal-dependent TIM barrel enzymes"/>
    <property type="match status" value="1"/>
</dbReference>
<dbReference type="HAMAP" id="MF_01951">
    <property type="entry name" value="UlaE"/>
    <property type="match status" value="1"/>
</dbReference>
<dbReference type="InterPro" id="IPR004560">
    <property type="entry name" value="L-Ru-5P_3-Epase"/>
</dbReference>
<dbReference type="InterPro" id="IPR023492">
    <property type="entry name" value="L-Ru-5P_3-Epase_Enterobacteria"/>
</dbReference>
<dbReference type="InterPro" id="IPR050417">
    <property type="entry name" value="Sugar_Epim/Isomerase"/>
</dbReference>
<dbReference type="InterPro" id="IPR036237">
    <property type="entry name" value="Xyl_isomerase-like_sf"/>
</dbReference>
<dbReference type="InterPro" id="IPR013022">
    <property type="entry name" value="Xyl_isomerase-like_TIM-brl"/>
</dbReference>
<dbReference type="NCBIfam" id="TIGR00542">
    <property type="entry name" value="hxl6Piso_put"/>
    <property type="match status" value="1"/>
</dbReference>
<dbReference type="NCBIfam" id="NF009688">
    <property type="entry name" value="PRK13209.1"/>
    <property type="match status" value="1"/>
</dbReference>
<dbReference type="NCBIfam" id="NF009689">
    <property type="entry name" value="PRK13210.1"/>
    <property type="match status" value="1"/>
</dbReference>
<dbReference type="PANTHER" id="PTHR43489">
    <property type="entry name" value="ISOMERASE"/>
    <property type="match status" value="1"/>
</dbReference>
<dbReference type="PANTHER" id="PTHR43489:SF8">
    <property type="entry name" value="L-RIBULOSE-5-PHOSPHATE 3-EPIMERASE ULAE"/>
    <property type="match status" value="1"/>
</dbReference>
<dbReference type="Pfam" id="PF01261">
    <property type="entry name" value="AP_endonuc_2"/>
    <property type="match status" value="1"/>
</dbReference>
<dbReference type="SUPFAM" id="SSF51658">
    <property type="entry name" value="Xylose isomerase-like"/>
    <property type="match status" value="1"/>
</dbReference>
<name>ULAE_SALPC</name>
<protein>
    <recommendedName>
        <fullName evidence="1">L-ribulose-5-phosphate 3-epimerase UlaE</fullName>
        <ecNumber evidence="1">5.1.3.22</ecNumber>
    </recommendedName>
    <alternativeName>
        <fullName evidence="1">L-ascorbate utilization protein E</fullName>
    </alternativeName>
    <alternativeName>
        <fullName evidence="1">L-xylulose-5-phosphate 3-epimerase</fullName>
    </alternativeName>
</protein>
<organism>
    <name type="scientific">Salmonella paratyphi C (strain RKS4594)</name>
    <dbReference type="NCBI Taxonomy" id="476213"/>
    <lineage>
        <taxon>Bacteria</taxon>
        <taxon>Pseudomonadati</taxon>
        <taxon>Pseudomonadota</taxon>
        <taxon>Gammaproteobacteria</taxon>
        <taxon>Enterobacterales</taxon>
        <taxon>Enterobacteriaceae</taxon>
        <taxon>Salmonella</taxon>
    </lineage>
</organism>
<comment type="function">
    <text evidence="1">Catalyzes the isomerization of L-xylulose-5-phosphate to L-ribulose-5-phosphate. Is involved in the anaerobic L-ascorbate utilization.</text>
</comment>
<comment type="catalytic activity">
    <reaction evidence="1">
        <text>L-ribulose 5-phosphate = L-xylulose 5-phosphate</text>
        <dbReference type="Rhea" id="RHEA:18497"/>
        <dbReference type="ChEBI" id="CHEBI:57829"/>
        <dbReference type="ChEBI" id="CHEBI:58226"/>
        <dbReference type="EC" id="5.1.3.22"/>
    </reaction>
</comment>
<comment type="pathway">
    <text evidence="1">Cofactor degradation; L-ascorbate degradation; D-xylulose 5-phosphate from L-ascorbate: step 3/4.</text>
</comment>
<comment type="induction">
    <text evidence="1">Induced by L-ascorbate. Repressed by UlaR.</text>
</comment>
<comment type="similarity">
    <text evidence="1">Belongs to the L-ribulose-5-phosphate 3-epimerase family.</text>
</comment>
<keyword id="KW-0413">Isomerase</keyword>
<gene>
    <name evidence="1" type="primary">ulaE</name>
    <name type="ordered locus">SPC_4534</name>
</gene>
<reference key="1">
    <citation type="journal article" date="2009" name="PLoS ONE">
        <title>Salmonella paratyphi C: genetic divergence from Salmonella choleraesuis and pathogenic convergence with Salmonella typhi.</title>
        <authorList>
            <person name="Liu W.-Q."/>
            <person name="Feng Y."/>
            <person name="Wang Y."/>
            <person name="Zou Q.-H."/>
            <person name="Chen F."/>
            <person name="Guo J.-T."/>
            <person name="Peng Y.-H."/>
            <person name="Jin Y."/>
            <person name="Li Y.-G."/>
            <person name="Hu S.-N."/>
            <person name="Johnston R.N."/>
            <person name="Liu G.-R."/>
            <person name="Liu S.-L."/>
        </authorList>
    </citation>
    <scope>NUCLEOTIDE SEQUENCE [LARGE SCALE GENOMIC DNA]</scope>
    <source>
        <strain>RKS4594</strain>
    </source>
</reference>
<sequence length="284" mass="31679">MLSKQIPLGIYEKALPAGECWLERLRLAKTLGFDFVEMSVDETDARLARLDWSREQRLALVSAVAETGVRVPSMCLSAHRRFPLGSEDDAVRAQGLEIMRKAIQFAQDVGIRVIQLAGYDVYYQQANDETRCRFRDGLKESVDMASRAQVTLAMEIMDYPLMNSISKALGYAHYLNNPWFQLYPDIGNLSAWDNDVQMELQAGIGHIVAVHVKDTKPGVFKNVPFGEGVVDFESCFATLKQSGYCGPYLIEMWSETAENPAAEVAKARDWVKARMASAGLVEAA</sequence>
<proteinExistence type="inferred from homology"/>
<evidence type="ECO:0000255" key="1">
    <source>
        <dbReference type="HAMAP-Rule" id="MF_01951"/>
    </source>
</evidence>